<name>EVA1C_PANTR</name>
<proteinExistence type="inferred from homology"/>
<keyword id="KW-0025">Alternative splicing</keyword>
<keyword id="KW-1003">Cell membrane</keyword>
<keyword id="KW-0325">Glycoprotein</keyword>
<keyword id="KW-0430">Lectin</keyword>
<keyword id="KW-0472">Membrane</keyword>
<keyword id="KW-1185">Reference proteome</keyword>
<keyword id="KW-0677">Repeat</keyword>
<keyword id="KW-0732">Signal</keyword>
<keyword id="KW-0812">Transmembrane</keyword>
<keyword id="KW-1133">Transmembrane helix</keyword>
<sequence length="441" mass="49385">MLLPGPARQPPTPQPVQHPGLRRQVEPPGQLLRLFYCTVLVCSKEISALTDFSGYLTKLLQNHTTYACDGDYLNLQCPRHSTISVQSAFYGQDYQMCSSQKPASQREDSLTCVAATTFQKVLDECQNQRACHLLVNSRVFGPDLCPGSSKYLLVSFKCQPNELKNKTVCEDQELKLHCHESKFLNIYSATYGRRTQERDICSSEAERLPPFDCLSYSALQVLSRRCYGKQRCKIIVNNHHFGSPCLPGVKKYLTVTYACVPKNILTAIDPAIANLKPSLKQKDGEYGINFDPSGSKVPRKDGILVSNSLAAFAYIRAHPERAALLFVSSVCIGLALTLCALVIRESCAKDFRDLQLGREQLVPGSDKVEEDSEDEEEEEDSSESDFPGELSGFCRTSYPVYSSIEAAELAERIERREQIIQEIWMNSGLDTSLPRNMGQFY</sequence>
<dbReference type="EMBL" id="AL954209">
    <property type="protein sequence ID" value="CAH18586.1"/>
    <property type="molecule type" value="Genomic_DNA"/>
</dbReference>
<dbReference type="EMBL" id="AL954209">
    <property type="protein sequence ID" value="CAH18587.1"/>
    <property type="molecule type" value="Genomic_DNA"/>
</dbReference>
<dbReference type="EMBL" id="AL954207">
    <property type="protein sequence ID" value="CAH18583.1"/>
    <property type="molecule type" value="Genomic_DNA"/>
</dbReference>
<dbReference type="RefSeq" id="NP_001065280.2">
    <molecule id="Q68US5-1"/>
    <property type="nucleotide sequence ID" value="NM_001071812.2"/>
</dbReference>
<dbReference type="SMR" id="Q68US5"/>
<dbReference type="FunCoup" id="Q68US5">
    <property type="interactions" value="273"/>
</dbReference>
<dbReference type="STRING" id="9598.ENSPTRP00000023845"/>
<dbReference type="GlyCosmos" id="Q68US5">
    <property type="glycosylation" value="2 sites, No reported glycans"/>
</dbReference>
<dbReference type="PaxDb" id="9598-ENSPTRP00000023845"/>
<dbReference type="GeneID" id="473956"/>
<dbReference type="KEGG" id="ptr:473956"/>
<dbReference type="CTD" id="59271"/>
<dbReference type="eggNOG" id="KOG4729">
    <property type="taxonomic scope" value="Eukaryota"/>
</dbReference>
<dbReference type="HOGENOM" id="CLU_050537_0_1_1"/>
<dbReference type="InParanoid" id="Q68US5"/>
<dbReference type="TreeFam" id="TF328177"/>
<dbReference type="Proteomes" id="UP000002277">
    <property type="component" value="Unplaced"/>
</dbReference>
<dbReference type="Proteomes" id="UP000243858">
    <property type="component" value="Chromosome 22"/>
</dbReference>
<dbReference type="GO" id="GO:0005886">
    <property type="term" value="C:plasma membrane"/>
    <property type="evidence" value="ECO:0007669"/>
    <property type="project" value="UniProtKB-SubCell"/>
</dbReference>
<dbReference type="GO" id="GO:0030246">
    <property type="term" value="F:carbohydrate binding"/>
    <property type="evidence" value="ECO:0007669"/>
    <property type="project" value="UniProtKB-KW"/>
</dbReference>
<dbReference type="GO" id="GO:0008201">
    <property type="term" value="F:heparin binding"/>
    <property type="evidence" value="ECO:0000318"/>
    <property type="project" value="GO_Central"/>
</dbReference>
<dbReference type="CDD" id="cd22828">
    <property type="entry name" value="Gal_Rha_Lectin_EVA1_EVA1C_rpt1"/>
    <property type="match status" value="1"/>
</dbReference>
<dbReference type="CDD" id="cd22829">
    <property type="entry name" value="Gal_Rha_Lectin_EVA1_EVA1C_rpt2"/>
    <property type="match status" value="1"/>
</dbReference>
<dbReference type="FunFam" id="2.60.120.740:FF:000003">
    <property type="entry name" value="Protein eva-1 homolog C"/>
    <property type="match status" value="1"/>
</dbReference>
<dbReference type="FunFam" id="2.60.120.740:FF:000004">
    <property type="entry name" value="Protein eva-1 homolog C"/>
    <property type="match status" value="1"/>
</dbReference>
<dbReference type="Gene3D" id="2.60.120.740">
    <property type="match status" value="2"/>
</dbReference>
<dbReference type="InterPro" id="IPR039500">
    <property type="entry name" value="EVA1_dom"/>
</dbReference>
<dbReference type="InterPro" id="IPR000922">
    <property type="entry name" value="Lectin_gal-bd_dom"/>
</dbReference>
<dbReference type="InterPro" id="IPR043159">
    <property type="entry name" value="Lectin_gal-bd_sf"/>
</dbReference>
<dbReference type="PANTHER" id="PTHR46780">
    <property type="entry name" value="PROTEIN EVA-1"/>
    <property type="match status" value="1"/>
</dbReference>
<dbReference type="Pfam" id="PF14851">
    <property type="entry name" value="FAM176"/>
    <property type="match status" value="1"/>
</dbReference>
<dbReference type="Pfam" id="PF02140">
    <property type="entry name" value="SUEL_Lectin"/>
    <property type="match status" value="2"/>
</dbReference>
<dbReference type="PROSITE" id="PS50228">
    <property type="entry name" value="SUEL_LECTIN"/>
    <property type="match status" value="2"/>
</dbReference>
<organism>
    <name type="scientific">Pan troglodytes</name>
    <name type="common">Chimpanzee</name>
    <dbReference type="NCBI Taxonomy" id="9598"/>
    <lineage>
        <taxon>Eukaryota</taxon>
        <taxon>Metazoa</taxon>
        <taxon>Chordata</taxon>
        <taxon>Craniata</taxon>
        <taxon>Vertebrata</taxon>
        <taxon>Euteleostomi</taxon>
        <taxon>Mammalia</taxon>
        <taxon>Eutheria</taxon>
        <taxon>Euarchontoglires</taxon>
        <taxon>Primates</taxon>
        <taxon>Haplorrhini</taxon>
        <taxon>Catarrhini</taxon>
        <taxon>Hominidae</taxon>
        <taxon>Pan</taxon>
    </lineage>
</organism>
<accession>Q68US5</accession>
<accession>Q68US4</accession>
<evidence type="ECO:0000250" key="1"/>
<evidence type="ECO:0000255" key="2"/>
<evidence type="ECO:0000255" key="3">
    <source>
        <dbReference type="PROSITE-ProRule" id="PRU00260"/>
    </source>
</evidence>
<evidence type="ECO:0000256" key="4">
    <source>
        <dbReference type="SAM" id="MobiDB-lite"/>
    </source>
</evidence>
<evidence type="ECO:0000305" key="5"/>
<reference key="1">
    <citation type="journal article" date="2004" name="Nature">
        <title>DNA sequence and comparative analysis of chimpanzee chromosome 22.</title>
        <authorList>
            <person name="Watanabe H."/>
            <person name="Fujiyama A."/>
            <person name="Hattori M."/>
            <person name="Taylor T.D."/>
            <person name="Toyoda A."/>
            <person name="Kuroki Y."/>
            <person name="Noguchi H."/>
            <person name="BenKahla A."/>
            <person name="Lehrach H."/>
            <person name="Sudbrak R."/>
            <person name="Kube M."/>
            <person name="Taenzer S."/>
            <person name="Galgoczy P."/>
            <person name="Platzer M."/>
            <person name="Scharfe M."/>
            <person name="Nordsiek G."/>
            <person name="Bloecker H."/>
            <person name="Hellmann I."/>
            <person name="Khaitovich P."/>
            <person name="Paeaebo S."/>
            <person name="Reinhardt R."/>
            <person name="Zheng H.-J."/>
            <person name="Zhang X.-L."/>
            <person name="Zhu G.-F."/>
            <person name="Wang B.-F."/>
            <person name="Fu G."/>
            <person name="Ren S.-X."/>
            <person name="Zhao G.-P."/>
            <person name="Chen Z."/>
            <person name="Lee Y.-S."/>
            <person name="Cheong J.-E."/>
            <person name="Choi S.-H."/>
            <person name="Wu K.-M."/>
            <person name="Liu T.-T."/>
            <person name="Hsiao K.-J."/>
            <person name="Tsai S.-F."/>
            <person name="Kim C.-G."/>
            <person name="Oota S."/>
            <person name="Kitano T."/>
            <person name="Kohara Y."/>
            <person name="Saitou N."/>
            <person name="Park H.-S."/>
            <person name="Wang S.-Y."/>
            <person name="Yaspo M.-L."/>
            <person name="Sakaki Y."/>
        </authorList>
    </citation>
    <scope>NUCLEOTIDE SEQUENCE [LARGE SCALE GENOMIC DNA]</scope>
</reference>
<feature type="signal peptide" evidence="2">
    <location>
        <begin position="1"/>
        <end position="48"/>
    </location>
</feature>
<feature type="chain" id="PRO_0000017673" description="Protein eva-1 homolog C">
    <location>
        <begin position="49"/>
        <end position="441"/>
    </location>
</feature>
<feature type="topological domain" description="Extracellular" evidence="2">
    <location>
        <begin position="49"/>
        <end position="322"/>
    </location>
</feature>
<feature type="transmembrane region" description="Helical" evidence="2">
    <location>
        <begin position="323"/>
        <end position="343"/>
    </location>
</feature>
<feature type="topological domain" description="Cytoplasmic" evidence="2">
    <location>
        <begin position="344"/>
        <end position="441"/>
    </location>
</feature>
<feature type="domain" description="SUEL-type lectin 1" evidence="3">
    <location>
        <begin position="67"/>
        <end position="159"/>
    </location>
</feature>
<feature type="domain" description="SUEL-type lectin 2" evidence="3">
    <location>
        <begin position="168"/>
        <end position="260"/>
    </location>
</feature>
<feature type="region of interest" description="Disordered" evidence="4">
    <location>
        <begin position="1"/>
        <end position="23"/>
    </location>
</feature>
<feature type="region of interest" description="Disordered" evidence="4">
    <location>
        <begin position="362"/>
        <end position="391"/>
    </location>
</feature>
<feature type="compositionally biased region" description="Pro residues" evidence="4">
    <location>
        <begin position="7"/>
        <end position="16"/>
    </location>
</feature>
<feature type="compositionally biased region" description="Acidic residues" evidence="4">
    <location>
        <begin position="368"/>
        <end position="383"/>
    </location>
</feature>
<feature type="glycosylation site" description="N-linked (GlcNAc...) asparagine" evidence="2">
    <location>
        <position position="62"/>
    </location>
</feature>
<feature type="glycosylation site" description="N-linked (GlcNAc...) asparagine" evidence="2">
    <location>
        <position position="165"/>
    </location>
</feature>
<feature type="splice variant" id="VSP_011936" description="In isoform B." evidence="5">
    <original>GYLTKLLQNHTTYACDG</original>
    <variation>EGAGRMPEPAGLPPPGQ</variation>
    <location>
        <begin position="54"/>
        <end position="70"/>
    </location>
</feature>
<feature type="splice variant" id="VSP_011937" description="In isoform B." evidence="5">
    <location>
        <begin position="71"/>
        <end position="441"/>
    </location>
</feature>
<protein>
    <recommendedName>
        <fullName>Protein eva-1 homolog C</fullName>
    </recommendedName>
    <alternativeName>
        <fullName>Protein FAM176C</fullName>
    </alternativeName>
</protein>
<comment type="function">
    <text evidence="1">Binds heparin.</text>
</comment>
<comment type="subcellular location">
    <subcellularLocation>
        <location evidence="5">Cell membrane</location>
        <topology evidence="5">Single-pass membrane protein</topology>
    </subcellularLocation>
</comment>
<comment type="alternative products">
    <event type="alternative splicing"/>
    <isoform>
        <id>Q68US5-1</id>
        <name>A</name>
        <sequence type="displayed"/>
    </isoform>
    <isoform>
        <id>Q68US5-2</id>
        <name>B</name>
        <sequence type="described" ref="VSP_011936 VSP_011937"/>
    </isoform>
</comment>
<comment type="similarity">
    <text evidence="5">Belongs to the EVA1 family.</text>
</comment>
<gene>
    <name type="primary">EVA1C</name>
    <name type="synonym">FAM176C</name>
</gene>